<comment type="function">
    <text evidence="2 3 7">Heat-shock transcription factor that specifically binds heat shock promoter elements (HSE) (By similarity). Required for denucleation and organelle rupture and degradation that occur during eye lens terminal differentiation, when fiber cells that compose the lens degrade all membrane-bound organelles in order to provide lens with transparency to allow the passage of light (By similarity). In this process, may regulate denucleation of lens fiber cells in part by activating DNASE2B transcription (By similarity). May be involved in DNA repair through the transcriptional regulation of RAD51 (By similarity). May up-regulate p53/TP53 protein in eye lens fiber cells, possibly through protein stabilization (By similarity). In the eye lens, controls the expression of alpha-crystallin B chain/CRYAB and consequently may be involved in the regulation of lysosomal acidification (PubMed:31786107).</text>
</comment>
<comment type="function">
    <molecule>Isoform HSF4A</molecule>
    <text evidence="5">Transcriptional repressor.</text>
</comment>
<comment type="function">
    <molecule>Isoform HSF4B</molecule>
    <text evidence="5">Transcriptional activator.</text>
</comment>
<comment type="subunit">
    <text evidence="3 5">Homotrimer (PubMed:10488131). Exhibits constitutive DNA binding and forms trimers even in the absence of stress (PubMed:10488131). Interacts with ALKBH4, DUSP26, MAPK1, MAPK2, MAPK8 and MAP kinase p38 (By similarity).</text>
</comment>
<comment type="subcellular location">
    <subcellularLocation>
        <location evidence="3">Nucleus</location>
    </subcellularLocation>
</comment>
<comment type="alternative products">
    <event type="alternative splicing"/>
    <isoform>
        <id>Q9R0L1-1</id>
        <name>HSF4B</name>
        <sequence type="displayed"/>
    </isoform>
    <isoform>
        <id>Q9R0L1-2</id>
        <name>HSF4A</name>
        <sequence type="described" ref="VSP_002419"/>
    </isoform>
</comment>
<comment type="tissue specificity">
    <text evidence="6">Preferentially expressed in brain and lung. Also found in the eye. Slightly detected in liver and skeletal muscle. Isoform B is the major species in various tissues.</text>
</comment>
<comment type="PTM">
    <text evidence="1">Phosphorylated mainly on serine residues. Phosphorylation on Ser-298 promotes sumoylation on Lys-293 (By similarity).</text>
</comment>
<comment type="PTM">
    <text evidence="1">Isoform HSF4B is constitutively sumoylated. Sumoylation represses the transcriptional activity and is promoted by phosphorylation on Ser-298. HSFA is not sumoylated (By similarity).</text>
</comment>
<comment type="similarity">
    <text evidence="9">Belongs to the HSF family.</text>
</comment>
<organism>
    <name type="scientific">Mus musculus</name>
    <name type="common">Mouse</name>
    <dbReference type="NCBI Taxonomy" id="10090"/>
    <lineage>
        <taxon>Eukaryota</taxon>
        <taxon>Metazoa</taxon>
        <taxon>Chordata</taxon>
        <taxon>Craniata</taxon>
        <taxon>Vertebrata</taxon>
        <taxon>Euteleostomi</taxon>
        <taxon>Mammalia</taxon>
        <taxon>Eutheria</taxon>
        <taxon>Euarchontoglires</taxon>
        <taxon>Glires</taxon>
        <taxon>Rodentia</taxon>
        <taxon>Myomorpha</taxon>
        <taxon>Muroidea</taxon>
        <taxon>Muridae</taxon>
        <taxon>Murinae</taxon>
        <taxon>Mus</taxon>
        <taxon>Mus</taxon>
    </lineage>
</organism>
<dbReference type="EMBL" id="AB029349">
    <property type="protein sequence ID" value="BAA84583.1"/>
    <property type="molecule type" value="mRNA"/>
</dbReference>
<dbReference type="EMBL" id="AB029350">
    <property type="protein sequence ID" value="BAA84584.1"/>
    <property type="molecule type" value="mRNA"/>
</dbReference>
<dbReference type="CCDS" id="CCDS57638.1">
    <molecule id="Q9R0L1-2"/>
</dbReference>
<dbReference type="CCDS" id="CCDS57639.1">
    <molecule id="Q9R0L1-1"/>
</dbReference>
<dbReference type="RefSeq" id="NP_001242971.1">
    <molecule id="Q9R0L1-1"/>
    <property type="nucleotide sequence ID" value="NM_001256042.1"/>
</dbReference>
<dbReference type="RefSeq" id="NP_036069.1">
    <molecule id="Q9R0L1-2"/>
    <property type="nucleotide sequence ID" value="NM_011939.3"/>
</dbReference>
<dbReference type="SMR" id="Q9R0L1"/>
<dbReference type="FunCoup" id="Q9R0L1">
    <property type="interactions" value="132"/>
</dbReference>
<dbReference type="STRING" id="10090.ENSMUSP00000048904"/>
<dbReference type="iPTMnet" id="Q9R0L1"/>
<dbReference type="PhosphoSitePlus" id="Q9R0L1"/>
<dbReference type="jPOST" id="Q9R0L1"/>
<dbReference type="PaxDb" id="10090-ENSMUSP00000048904"/>
<dbReference type="ProteomicsDB" id="273141">
    <molecule id="Q9R0L1-1"/>
</dbReference>
<dbReference type="ProteomicsDB" id="273142">
    <molecule id="Q9R0L1-2"/>
</dbReference>
<dbReference type="Antibodypedia" id="29424">
    <property type="antibodies" value="328 antibodies from 31 providers"/>
</dbReference>
<dbReference type="DNASU" id="26386"/>
<dbReference type="Ensembl" id="ENSMUST00000036127.9">
    <molecule id="Q9R0L1-1"/>
    <property type="protein sequence ID" value="ENSMUSP00000048904.3"/>
    <property type="gene ID" value="ENSMUSG00000033249.11"/>
</dbReference>
<dbReference type="Ensembl" id="ENSMUST00000173859.2">
    <molecule id="Q9R0L1-2"/>
    <property type="protein sequence ID" value="ENSMUSP00000134213.2"/>
    <property type="gene ID" value="ENSMUSG00000033249.11"/>
</dbReference>
<dbReference type="GeneID" id="26386"/>
<dbReference type="KEGG" id="mmu:26386"/>
<dbReference type="UCSC" id="uc009nca.2">
    <molecule id="Q9R0L1-2"/>
    <property type="organism name" value="mouse"/>
</dbReference>
<dbReference type="UCSC" id="uc009ncb.2">
    <molecule id="Q9R0L1-1"/>
    <property type="organism name" value="mouse"/>
</dbReference>
<dbReference type="AGR" id="MGI:1347058"/>
<dbReference type="CTD" id="3299"/>
<dbReference type="MGI" id="MGI:1347058">
    <property type="gene designation" value="Hsf4"/>
</dbReference>
<dbReference type="VEuPathDB" id="HostDB:ENSMUSG00000033249"/>
<dbReference type="eggNOG" id="KOG0627">
    <property type="taxonomic scope" value="Eukaryota"/>
</dbReference>
<dbReference type="GeneTree" id="ENSGT00940000158063"/>
<dbReference type="InParanoid" id="Q9R0L1"/>
<dbReference type="OMA" id="ACPGKDV"/>
<dbReference type="OrthoDB" id="60033at2759"/>
<dbReference type="PhylomeDB" id="Q9R0L1"/>
<dbReference type="TreeFam" id="TF330401"/>
<dbReference type="BioGRID-ORCS" id="26386">
    <property type="hits" value="2 hits in 80 CRISPR screens"/>
</dbReference>
<dbReference type="PRO" id="PR:Q9R0L1"/>
<dbReference type="Proteomes" id="UP000000589">
    <property type="component" value="Chromosome 8"/>
</dbReference>
<dbReference type="RNAct" id="Q9R0L1">
    <property type="molecule type" value="protein"/>
</dbReference>
<dbReference type="Bgee" id="ENSMUSG00000033249">
    <property type="expression patterns" value="Expressed in lens of camera-type eye and 94 other cell types or tissues"/>
</dbReference>
<dbReference type="ExpressionAtlas" id="Q9R0L1">
    <property type="expression patterns" value="baseline and differential"/>
</dbReference>
<dbReference type="GO" id="GO:0000785">
    <property type="term" value="C:chromatin"/>
    <property type="evidence" value="ECO:0007669"/>
    <property type="project" value="Ensembl"/>
</dbReference>
<dbReference type="GO" id="GO:0016607">
    <property type="term" value="C:nuclear speck"/>
    <property type="evidence" value="ECO:0007669"/>
    <property type="project" value="Ensembl"/>
</dbReference>
<dbReference type="GO" id="GO:0000981">
    <property type="term" value="F:DNA-binding transcription factor activity, RNA polymerase II-specific"/>
    <property type="evidence" value="ECO:0007669"/>
    <property type="project" value="Ensembl"/>
</dbReference>
<dbReference type="GO" id="GO:0042802">
    <property type="term" value="F:identical protein binding"/>
    <property type="evidence" value="ECO:0007669"/>
    <property type="project" value="Ensembl"/>
</dbReference>
<dbReference type="GO" id="GO:0000978">
    <property type="term" value="F:RNA polymerase II cis-regulatory region sequence-specific DNA binding"/>
    <property type="evidence" value="ECO:0007669"/>
    <property type="project" value="Ensembl"/>
</dbReference>
<dbReference type="GO" id="GO:0070306">
    <property type="term" value="P:lens fiber cell differentiation"/>
    <property type="evidence" value="ECO:0000250"/>
    <property type="project" value="UniProtKB"/>
</dbReference>
<dbReference type="GO" id="GO:0000122">
    <property type="term" value="P:negative regulation of transcription by RNA polymerase II"/>
    <property type="evidence" value="ECO:0007669"/>
    <property type="project" value="Ensembl"/>
</dbReference>
<dbReference type="FunFam" id="1.10.10.10:FF:000027">
    <property type="entry name" value="Heat shock transcription factor 1"/>
    <property type="match status" value="1"/>
</dbReference>
<dbReference type="Gene3D" id="1.10.10.10">
    <property type="entry name" value="Winged helix-like DNA-binding domain superfamily/Winged helix DNA-binding domain"/>
    <property type="match status" value="1"/>
</dbReference>
<dbReference type="InterPro" id="IPR000232">
    <property type="entry name" value="HSF_DNA-bd"/>
</dbReference>
<dbReference type="InterPro" id="IPR036388">
    <property type="entry name" value="WH-like_DNA-bd_sf"/>
</dbReference>
<dbReference type="InterPro" id="IPR036390">
    <property type="entry name" value="WH_DNA-bd_sf"/>
</dbReference>
<dbReference type="PANTHER" id="PTHR10015:SF213">
    <property type="entry name" value="HEAT SHOCK FACTOR PROTEIN 4"/>
    <property type="match status" value="1"/>
</dbReference>
<dbReference type="PANTHER" id="PTHR10015">
    <property type="entry name" value="HEAT SHOCK TRANSCRIPTION FACTOR"/>
    <property type="match status" value="1"/>
</dbReference>
<dbReference type="Pfam" id="PF00447">
    <property type="entry name" value="HSF_DNA-bind"/>
    <property type="match status" value="1"/>
</dbReference>
<dbReference type="PRINTS" id="PR00056">
    <property type="entry name" value="HSFDOMAIN"/>
</dbReference>
<dbReference type="SMART" id="SM00415">
    <property type="entry name" value="HSF"/>
    <property type="match status" value="1"/>
</dbReference>
<dbReference type="SUPFAM" id="SSF46785">
    <property type="entry name" value="Winged helix' DNA-binding domain"/>
    <property type="match status" value="1"/>
</dbReference>
<dbReference type="PROSITE" id="PS00434">
    <property type="entry name" value="HSF_DOMAIN"/>
    <property type="match status" value="1"/>
</dbReference>
<keyword id="KW-0010">Activator</keyword>
<keyword id="KW-0025">Alternative splicing</keyword>
<keyword id="KW-0238">DNA-binding</keyword>
<keyword id="KW-1017">Isopeptide bond</keyword>
<keyword id="KW-0539">Nucleus</keyword>
<keyword id="KW-0597">Phosphoprotein</keyword>
<keyword id="KW-1185">Reference proteome</keyword>
<keyword id="KW-0678">Repressor</keyword>
<keyword id="KW-0346">Stress response</keyword>
<keyword id="KW-0804">Transcription</keyword>
<keyword id="KW-0805">Transcription regulation</keyword>
<keyword id="KW-0832">Ubl conjugation</keyword>
<accession>Q9R0L1</accession>
<accession>Q9R0L2</accession>
<evidence type="ECO:0000250" key="1"/>
<evidence type="ECO:0000250" key="2">
    <source>
        <dbReference type="UniProtKB" id="Q5CZP2"/>
    </source>
</evidence>
<evidence type="ECO:0000250" key="3">
    <source>
        <dbReference type="UniProtKB" id="Q9ULV5"/>
    </source>
</evidence>
<evidence type="ECO:0000256" key="4">
    <source>
        <dbReference type="SAM" id="MobiDB-lite"/>
    </source>
</evidence>
<evidence type="ECO:0000269" key="5">
    <source>
    </source>
</evidence>
<evidence type="ECO:0000269" key="6">
    <source>
    </source>
</evidence>
<evidence type="ECO:0000269" key="7">
    <source>
    </source>
</evidence>
<evidence type="ECO:0000303" key="8">
    <source>
    </source>
</evidence>
<evidence type="ECO:0000305" key="9"/>
<reference key="1">
    <citation type="journal article" date="1999" name="J. Biol. Chem.">
        <title>The mammalian HSF4 gene generates both an activator and a repressor of heat shock genes by alternative splicing.</title>
        <authorList>
            <person name="Tanabe M."/>
            <person name="Sasai N."/>
            <person name="Nagata K."/>
            <person name="Liu X.-D."/>
            <person name="Liu P.C.C."/>
            <person name="Thiele D.J."/>
            <person name="Nakai A."/>
        </authorList>
    </citation>
    <scope>NUCLEOTIDE SEQUENCE [MRNA] (ISOFORMS HSF4A AND HSF4B)</scope>
    <scope>FUNCTION</scope>
    <scope>SUBUNIT</scope>
</reference>
<reference key="2">
    <citation type="journal article" date="2006" name="Mol. Cell. Biol.">
        <title>Association and regulation of heat shock transcription factor 4b with both extracellular signal-regulated kinase mitogen-activated protein kinase and dual-specificity tyrosine phosphatase DUSP26.</title>
        <authorList>
            <person name="Hu Y."/>
            <person name="Mivechi N.F."/>
        </authorList>
    </citation>
    <scope>TISSUE SPECIFICITY</scope>
</reference>
<reference key="3">
    <citation type="journal article" date="2020" name="Biochim. Biophys. Acta">
        <title>Heat shock factor 4 regulates lysosome activity by modulating the alphaB-crystallin-ATP6V1A-mTOR complex in ocular lens.</title>
        <authorList>
            <person name="Cui X."/>
            <person name="Feng R."/>
            <person name="Wang J."/>
            <person name="Du C."/>
            <person name="Pi X."/>
            <person name="Chen D."/>
            <person name="Li J."/>
            <person name="Li H."/>
            <person name="Zhang J."/>
            <person name="Zhang J."/>
            <person name="Mu H."/>
            <person name="Zhang F."/>
            <person name="Liu M."/>
            <person name="Hu Y."/>
        </authorList>
    </citation>
    <scope>FUNCTION</scope>
</reference>
<name>HSF4_MOUSE</name>
<sequence length="492" mass="53255">MQEAPAALPTEPGPSPVPAFLGKLWALVGDPGTDHLIRWSPSGTSFLVSDQSRFAKEVLPQYFKHSNMASFVRQLNMYGFRKVVSIEQGGLLRPERDHVEFQHPSFVRGREQLLERVRRKVPALRGDDSRWRPEDLSRLLGEVQALRGVQESTEARLQELRQQNEILWREVVTLRQSHSQQHRVIGKLIQCLFGPLQTGPSSTGAKRKLSLMLDEGSACSASAKFNACPVSGALLQDPYFIQSPLPETTLGLSPHRARGPIISDIPEDSPSPEGHRLSPSGGCRRVKGLALLKEEPASPGGDGEAGLALAPNECDFCVTAPPPLPVAVVQAILEGKGSYSPEGPRSVQQPEPRGPREVPDRGTLGLDRGNRSPESLLPPMLLRPAPETLEPVAPVDVLGPSLHGREWTLMDLDMELSLMQPLAPETDEAELTVKELNSSGVGKDHTLGTPLMLDVQADLEGAALSVPGALTLYNVTESNASYLDPGASPSSP</sequence>
<feature type="chain" id="PRO_0000124572" description="Heat shock factor protein 4">
    <location>
        <begin position="1"/>
        <end position="492"/>
    </location>
</feature>
<feature type="DNA-binding region" evidence="1">
    <location>
        <begin position="17"/>
        <end position="122"/>
    </location>
</feature>
<feature type="region of interest" description="Hydrophobic repeat HR-A/B">
    <location>
        <begin position="129"/>
        <end position="203"/>
    </location>
</feature>
<feature type="region of interest" description="Interactions with DUSP26, MAPK1 and MAPK2" evidence="1">
    <location>
        <begin position="245"/>
        <end position="322"/>
    </location>
</feature>
<feature type="region of interest" description="Disordered" evidence="4">
    <location>
        <begin position="263"/>
        <end position="282"/>
    </location>
</feature>
<feature type="region of interest" description="Disordered" evidence="4">
    <location>
        <begin position="337"/>
        <end position="378"/>
    </location>
</feature>
<feature type="region of interest" description="Hydrophobic repeat HR-C">
    <location>
        <begin position="364"/>
        <end position="389"/>
    </location>
</feature>
<feature type="modified residue" description="Phosphoserine" evidence="3">
    <location>
        <position position="298"/>
    </location>
</feature>
<feature type="cross-link" description="Glycyl lysine isopeptide (Lys-Gly) (interchain with G-Cter in SUMO)" evidence="1">
    <location>
        <position position="293"/>
    </location>
</feature>
<feature type="splice variant" id="VSP_002419" description="In isoform HSF4A." evidence="8">
    <original>LPETTLGLSPHRARGPIISDIPEDSPSPEGHRLSPSGGCRRVKGLALLKEEPASPGGDGEAGLALAPNECDFCVT</original>
    <variation>SPCSPSQRPRWASALTGPEGPSSLTSQKILHLLKDTGFLPPVVAG</variation>
    <location>
        <begin position="245"/>
        <end position="319"/>
    </location>
</feature>
<protein>
    <recommendedName>
        <fullName>Heat shock factor protein 4</fullName>
        <shortName>HSF 4</shortName>
        <shortName>mHSF4</shortName>
    </recommendedName>
    <alternativeName>
        <fullName>Heat shock transcription factor 4</fullName>
        <shortName>HSTF 4</shortName>
    </alternativeName>
</protein>
<proteinExistence type="evidence at protein level"/>
<gene>
    <name type="primary">Hsf4</name>
</gene>